<feature type="chain" id="PRO_0000165530" description="Holliday junction branch migration complex subunit RuvB">
    <location>
        <begin position="1"/>
        <end position="336"/>
    </location>
</feature>
<feature type="region of interest" description="Large ATPase domain (RuvB-L)" evidence="1">
    <location>
        <begin position="4"/>
        <end position="184"/>
    </location>
</feature>
<feature type="region of interest" description="Small ATPAse domain (RuvB-S)" evidence="1">
    <location>
        <begin position="185"/>
        <end position="255"/>
    </location>
</feature>
<feature type="region of interest" description="Head domain (RuvB-H)" evidence="1">
    <location>
        <begin position="258"/>
        <end position="336"/>
    </location>
</feature>
<feature type="binding site" evidence="1">
    <location>
        <position position="23"/>
    </location>
    <ligand>
        <name>ATP</name>
        <dbReference type="ChEBI" id="CHEBI:30616"/>
    </ligand>
</feature>
<feature type="binding site" evidence="1">
    <location>
        <position position="24"/>
    </location>
    <ligand>
        <name>ATP</name>
        <dbReference type="ChEBI" id="CHEBI:30616"/>
    </ligand>
</feature>
<feature type="binding site" evidence="1">
    <location>
        <position position="65"/>
    </location>
    <ligand>
        <name>ATP</name>
        <dbReference type="ChEBI" id="CHEBI:30616"/>
    </ligand>
</feature>
<feature type="binding site" evidence="1">
    <location>
        <position position="68"/>
    </location>
    <ligand>
        <name>ATP</name>
        <dbReference type="ChEBI" id="CHEBI:30616"/>
    </ligand>
</feature>
<feature type="binding site" evidence="1">
    <location>
        <position position="69"/>
    </location>
    <ligand>
        <name>ATP</name>
        <dbReference type="ChEBI" id="CHEBI:30616"/>
    </ligand>
</feature>
<feature type="binding site" evidence="1">
    <location>
        <position position="69"/>
    </location>
    <ligand>
        <name>Mg(2+)</name>
        <dbReference type="ChEBI" id="CHEBI:18420"/>
    </ligand>
</feature>
<feature type="binding site" evidence="1">
    <location>
        <position position="70"/>
    </location>
    <ligand>
        <name>ATP</name>
        <dbReference type="ChEBI" id="CHEBI:30616"/>
    </ligand>
</feature>
<feature type="binding site" evidence="1">
    <location>
        <begin position="131"/>
        <end position="133"/>
    </location>
    <ligand>
        <name>ATP</name>
        <dbReference type="ChEBI" id="CHEBI:30616"/>
    </ligand>
</feature>
<feature type="binding site" evidence="1">
    <location>
        <position position="174"/>
    </location>
    <ligand>
        <name>ATP</name>
        <dbReference type="ChEBI" id="CHEBI:30616"/>
    </ligand>
</feature>
<feature type="binding site" evidence="1">
    <location>
        <position position="184"/>
    </location>
    <ligand>
        <name>ATP</name>
        <dbReference type="ChEBI" id="CHEBI:30616"/>
    </ligand>
</feature>
<feature type="binding site" evidence="1">
    <location>
        <position position="221"/>
    </location>
    <ligand>
        <name>ATP</name>
        <dbReference type="ChEBI" id="CHEBI:30616"/>
    </ligand>
</feature>
<feature type="binding site" evidence="1">
    <location>
        <position position="294"/>
    </location>
    <ligand>
        <name>DNA</name>
        <dbReference type="ChEBI" id="CHEBI:16991"/>
    </ligand>
</feature>
<feature type="binding site" evidence="1">
    <location>
        <position position="313"/>
    </location>
    <ligand>
        <name>DNA</name>
        <dbReference type="ChEBI" id="CHEBI:16991"/>
    </ligand>
</feature>
<feature type="binding site" evidence="1">
    <location>
        <position position="318"/>
    </location>
    <ligand>
        <name>DNA</name>
        <dbReference type="ChEBI" id="CHEBI:16991"/>
    </ligand>
</feature>
<keyword id="KW-0067">ATP-binding</keyword>
<keyword id="KW-0963">Cytoplasm</keyword>
<keyword id="KW-0227">DNA damage</keyword>
<keyword id="KW-0233">DNA recombination</keyword>
<keyword id="KW-0234">DNA repair</keyword>
<keyword id="KW-0238">DNA-binding</keyword>
<keyword id="KW-0378">Hydrolase</keyword>
<keyword id="KW-0547">Nucleotide-binding</keyword>
<keyword id="KW-1185">Reference proteome</keyword>
<keyword id="KW-0742">SOS response</keyword>
<accession>P0A813</accession>
<accession>P08577</accession>
<protein>
    <recommendedName>
        <fullName evidence="1">Holliday junction branch migration complex subunit RuvB</fullName>
        <ecNumber evidence="1">3.6.4.-</ecNumber>
    </recommendedName>
</protein>
<sequence length="336" mass="37174">MIEADRLISAGTTLPEDVADRAIRPKLLEEYVGQPQVRSQMEIFIKAAKLRGDALDHLLIFGPPGLGKTTLANIVANEMGVNLRTTSGPVLEKAGDLAAMLTNLEPHDVLFIDEIHRLSPVVEEVLYPAMEDYQLDIMIGEGPAARSIKIDLPPFTLIGATTRAGSLTSPLRDRFGIVQRLEFYQVPDLQYIVSRSARFMGLEMSDDGALEVARRARGTPRIANRLLRRVRDFAEVKHDGTISADIAAQALDMLNVDAEGFDYMDRKLLLAVIDKFFGGPVGLDNLAAAIGEERETIEDVLEPYLIQQGFLQRTPRGRMATTRAWNHFGITPPEMP</sequence>
<proteinExistence type="inferred from homology"/>
<organism>
    <name type="scientific">Escherichia coli O157:H7</name>
    <dbReference type="NCBI Taxonomy" id="83334"/>
    <lineage>
        <taxon>Bacteria</taxon>
        <taxon>Pseudomonadati</taxon>
        <taxon>Pseudomonadota</taxon>
        <taxon>Gammaproteobacteria</taxon>
        <taxon>Enterobacterales</taxon>
        <taxon>Enterobacteriaceae</taxon>
        <taxon>Escherichia</taxon>
    </lineage>
</organism>
<dbReference type="EC" id="3.6.4.-" evidence="1"/>
<dbReference type="EMBL" id="AE005174">
    <property type="protein sequence ID" value="AAG56850.1"/>
    <property type="molecule type" value="Genomic_DNA"/>
</dbReference>
<dbReference type="EMBL" id="BA000007">
    <property type="protein sequence ID" value="BAB35993.1"/>
    <property type="molecule type" value="Genomic_DNA"/>
</dbReference>
<dbReference type="PIR" id="B90950">
    <property type="entry name" value="B90950"/>
</dbReference>
<dbReference type="PIR" id="F85798">
    <property type="entry name" value="F85798"/>
</dbReference>
<dbReference type="RefSeq" id="NP_310597.1">
    <property type="nucleotide sequence ID" value="NC_002695.1"/>
</dbReference>
<dbReference type="RefSeq" id="WP_000568519.1">
    <property type="nucleotide sequence ID" value="NZ_VOAI01000010.1"/>
</dbReference>
<dbReference type="SMR" id="P0A813"/>
<dbReference type="STRING" id="155864.Z2912"/>
<dbReference type="GeneID" id="75202735"/>
<dbReference type="GeneID" id="913568"/>
<dbReference type="KEGG" id="ece:Z2912"/>
<dbReference type="KEGG" id="ecs:ECs_2570"/>
<dbReference type="PATRIC" id="fig|386585.9.peg.2694"/>
<dbReference type="eggNOG" id="COG2255">
    <property type="taxonomic scope" value="Bacteria"/>
</dbReference>
<dbReference type="HOGENOM" id="CLU_055599_1_0_6"/>
<dbReference type="OMA" id="IHRMSRP"/>
<dbReference type="Proteomes" id="UP000000558">
    <property type="component" value="Chromosome"/>
</dbReference>
<dbReference type="Proteomes" id="UP000002519">
    <property type="component" value="Chromosome"/>
</dbReference>
<dbReference type="GO" id="GO:0005737">
    <property type="term" value="C:cytoplasm"/>
    <property type="evidence" value="ECO:0007669"/>
    <property type="project" value="UniProtKB-SubCell"/>
</dbReference>
<dbReference type="GO" id="GO:0048476">
    <property type="term" value="C:Holliday junction resolvase complex"/>
    <property type="evidence" value="ECO:0007669"/>
    <property type="project" value="UniProtKB-UniRule"/>
</dbReference>
<dbReference type="GO" id="GO:0005524">
    <property type="term" value="F:ATP binding"/>
    <property type="evidence" value="ECO:0007669"/>
    <property type="project" value="UniProtKB-UniRule"/>
</dbReference>
<dbReference type="GO" id="GO:0016887">
    <property type="term" value="F:ATP hydrolysis activity"/>
    <property type="evidence" value="ECO:0007669"/>
    <property type="project" value="InterPro"/>
</dbReference>
<dbReference type="GO" id="GO:0000400">
    <property type="term" value="F:four-way junction DNA binding"/>
    <property type="evidence" value="ECO:0007669"/>
    <property type="project" value="UniProtKB-UniRule"/>
</dbReference>
<dbReference type="GO" id="GO:0009378">
    <property type="term" value="F:four-way junction helicase activity"/>
    <property type="evidence" value="ECO:0007669"/>
    <property type="project" value="InterPro"/>
</dbReference>
<dbReference type="GO" id="GO:0006310">
    <property type="term" value="P:DNA recombination"/>
    <property type="evidence" value="ECO:0007669"/>
    <property type="project" value="UniProtKB-UniRule"/>
</dbReference>
<dbReference type="GO" id="GO:0006281">
    <property type="term" value="P:DNA repair"/>
    <property type="evidence" value="ECO:0007669"/>
    <property type="project" value="UniProtKB-UniRule"/>
</dbReference>
<dbReference type="GO" id="GO:0009432">
    <property type="term" value="P:SOS response"/>
    <property type="evidence" value="ECO:0007669"/>
    <property type="project" value="UniProtKB-UniRule"/>
</dbReference>
<dbReference type="CDD" id="cd00009">
    <property type="entry name" value="AAA"/>
    <property type="match status" value="1"/>
</dbReference>
<dbReference type="FunFam" id="1.10.10.10:FF:000086">
    <property type="entry name" value="Holliday junction ATP-dependent DNA helicase RuvB"/>
    <property type="match status" value="1"/>
</dbReference>
<dbReference type="FunFam" id="1.10.8.60:FF:000023">
    <property type="entry name" value="Holliday junction ATP-dependent DNA helicase RuvB"/>
    <property type="match status" value="1"/>
</dbReference>
<dbReference type="FunFam" id="3.40.50.300:FF:000073">
    <property type="entry name" value="Holliday junction ATP-dependent DNA helicase RuvB"/>
    <property type="match status" value="1"/>
</dbReference>
<dbReference type="Gene3D" id="1.10.8.60">
    <property type="match status" value="1"/>
</dbReference>
<dbReference type="Gene3D" id="3.40.50.300">
    <property type="entry name" value="P-loop containing nucleotide triphosphate hydrolases"/>
    <property type="match status" value="1"/>
</dbReference>
<dbReference type="Gene3D" id="1.10.10.10">
    <property type="entry name" value="Winged helix-like DNA-binding domain superfamily/Winged helix DNA-binding domain"/>
    <property type="match status" value="1"/>
</dbReference>
<dbReference type="HAMAP" id="MF_00016">
    <property type="entry name" value="DNA_HJ_migration_RuvB"/>
    <property type="match status" value="1"/>
</dbReference>
<dbReference type="InterPro" id="IPR003593">
    <property type="entry name" value="AAA+_ATPase"/>
</dbReference>
<dbReference type="InterPro" id="IPR041445">
    <property type="entry name" value="AAA_lid_4"/>
</dbReference>
<dbReference type="InterPro" id="IPR004605">
    <property type="entry name" value="DNA_helicase_Holl-junc_RuvB"/>
</dbReference>
<dbReference type="InterPro" id="IPR027417">
    <property type="entry name" value="P-loop_NTPase"/>
</dbReference>
<dbReference type="InterPro" id="IPR008824">
    <property type="entry name" value="RuvB-like_N"/>
</dbReference>
<dbReference type="InterPro" id="IPR008823">
    <property type="entry name" value="RuvB_C"/>
</dbReference>
<dbReference type="InterPro" id="IPR036388">
    <property type="entry name" value="WH-like_DNA-bd_sf"/>
</dbReference>
<dbReference type="InterPro" id="IPR036390">
    <property type="entry name" value="WH_DNA-bd_sf"/>
</dbReference>
<dbReference type="NCBIfam" id="NF000868">
    <property type="entry name" value="PRK00080.1"/>
    <property type="match status" value="1"/>
</dbReference>
<dbReference type="NCBIfam" id="TIGR00635">
    <property type="entry name" value="ruvB"/>
    <property type="match status" value="1"/>
</dbReference>
<dbReference type="PANTHER" id="PTHR42848">
    <property type="match status" value="1"/>
</dbReference>
<dbReference type="PANTHER" id="PTHR42848:SF1">
    <property type="entry name" value="HOLLIDAY JUNCTION BRANCH MIGRATION COMPLEX SUBUNIT RUVB"/>
    <property type="match status" value="1"/>
</dbReference>
<dbReference type="Pfam" id="PF17864">
    <property type="entry name" value="AAA_lid_4"/>
    <property type="match status" value="1"/>
</dbReference>
<dbReference type="Pfam" id="PF05491">
    <property type="entry name" value="RuvB_C"/>
    <property type="match status" value="1"/>
</dbReference>
<dbReference type="Pfam" id="PF05496">
    <property type="entry name" value="RuvB_N"/>
    <property type="match status" value="1"/>
</dbReference>
<dbReference type="SMART" id="SM00382">
    <property type="entry name" value="AAA"/>
    <property type="match status" value="1"/>
</dbReference>
<dbReference type="SUPFAM" id="SSF52540">
    <property type="entry name" value="P-loop containing nucleoside triphosphate hydrolases"/>
    <property type="match status" value="1"/>
</dbReference>
<dbReference type="SUPFAM" id="SSF46785">
    <property type="entry name" value="Winged helix' DNA-binding domain"/>
    <property type="match status" value="1"/>
</dbReference>
<comment type="function">
    <text evidence="1">The RuvA-RuvB-RuvC complex processes Holliday junction (HJ) DNA during genetic recombination and DNA repair, while the RuvA-RuvB complex plays an important role in the rescue of blocked DNA replication forks via replication fork reversal (RFR). RuvA specifically binds to HJ cruciform DNA, conferring on it an open structure. The RuvB hexamer acts as an ATP-dependent pump, pulling dsDNA into and through the RuvAB complex. RuvB forms 2 homohexamers on either side of HJ DNA bound by 1 or 2 RuvA tetramers; 4 subunits per hexamer contact DNA at a time. Coordinated motions by a converter formed by DNA-disengaged RuvB subunits stimulates ATP hydrolysis and nucleotide exchange. Immobilization of the converter enables RuvB to convert the ATP-contained energy into a lever motion, pulling 2 nucleotides of DNA out of the RuvA tetramer per ATP hydrolyzed, thus driving DNA branch migration. The RuvB motors rotate together with the DNA substrate, which together with the progressing nucleotide cycle form the mechanistic basis for DNA recombination by continuous HJ branch migration. Branch migration allows RuvC to scan DNA until it finds its consensus sequence, where it cleaves and resolves cruciform DNA.</text>
</comment>
<comment type="catalytic activity">
    <reaction evidence="1">
        <text>ATP + H2O = ADP + phosphate + H(+)</text>
        <dbReference type="Rhea" id="RHEA:13065"/>
        <dbReference type="ChEBI" id="CHEBI:15377"/>
        <dbReference type="ChEBI" id="CHEBI:15378"/>
        <dbReference type="ChEBI" id="CHEBI:30616"/>
        <dbReference type="ChEBI" id="CHEBI:43474"/>
        <dbReference type="ChEBI" id="CHEBI:456216"/>
    </reaction>
</comment>
<comment type="subunit">
    <text evidence="1">Homohexamer. Forms an RuvA(8)-RuvB(12)-Holliday junction (HJ) complex. HJ DNA is sandwiched between 2 RuvA tetramers; dsDNA enters through RuvA and exits via RuvB. An RuvB hexamer assembles on each DNA strand where it exits the tetramer. Each RuvB hexamer is contacted by two RuvA subunits (via domain III) on 2 adjacent RuvB subunits; this complex drives branch migration. In the full resolvosome a probable DNA-RuvA(4)-RuvB(12)-RuvC(2) complex forms which resolves the HJ.</text>
</comment>
<comment type="subcellular location">
    <subcellularLocation>
        <location evidence="1">Cytoplasm</location>
    </subcellularLocation>
</comment>
<comment type="domain">
    <text evidence="1">Has 3 domains, the large (RuvB-L) and small ATPase (RuvB-S) domains and the C-terminal head (RuvB-H) domain. The head domain binds DNA, while the ATPase domains jointly bind ATP, ADP or are empty depending on the state of the subunit in the translocation cycle. During a single DNA translocation step the structure of each domain remains the same, but their relative positions change.</text>
</comment>
<comment type="similarity">
    <text evidence="1">Belongs to the RuvB family.</text>
</comment>
<gene>
    <name evidence="1" type="primary">ruvB</name>
    <name type="ordered locus">Z2912</name>
    <name type="ordered locus">ECs2570</name>
</gene>
<name>RUVB_ECO57</name>
<reference key="1">
    <citation type="journal article" date="2001" name="Nature">
        <title>Genome sequence of enterohaemorrhagic Escherichia coli O157:H7.</title>
        <authorList>
            <person name="Perna N.T."/>
            <person name="Plunkett G. III"/>
            <person name="Burland V."/>
            <person name="Mau B."/>
            <person name="Glasner J.D."/>
            <person name="Rose D.J."/>
            <person name="Mayhew G.F."/>
            <person name="Evans P.S."/>
            <person name="Gregor J."/>
            <person name="Kirkpatrick H.A."/>
            <person name="Posfai G."/>
            <person name="Hackett J."/>
            <person name="Klink S."/>
            <person name="Boutin A."/>
            <person name="Shao Y."/>
            <person name="Miller L."/>
            <person name="Grotbeck E.J."/>
            <person name="Davis N.W."/>
            <person name="Lim A."/>
            <person name="Dimalanta E.T."/>
            <person name="Potamousis K."/>
            <person name="Apodaca J."/>
            <person name="Anantharaman T.S."/>
            <person name="Lin J."/>
            <person name="Yen G."/>
            <person name="Schwartz D.C."/>
            <person name="Welch R.A."/>
            <person name="Blattner F.R."/>
        </authorList>
    </citation>
    <scope>NUCLEOTIDE SEQUENCE [LARGE SCALE GENOMIC DNA]</scope>
    <source>
        <strain>O157:H7 / EDL933 / ATCC 700927 / EHEC</strain>
    </source>
</reference>
<reference key="2">
    <citation type="journal article" date="2001" name="DNA Res.">
        <title>Complete genome sequence of enterohemorrhagic Escherichia coli O157:H7 and genomic comparison with a laboratory strain K-12.</title>
        <authorList>
            <person name="Hayashi T."/>
            <person name="Makino K."/>
            <person name="Ohnishi M."/>
            <person name="Kurokawa K."/>
            <person name="Ishii K."/>
            <person name="Yokoyama K."/>
            <person name="Han C.-G."/>
            <person name="Ohtsubo E."/>
            <person name="Nakayama K."/>
            <person name="Murata T."/>
            <person name="Tanaka M."/>
            <person name="Tobe T."/>
            <person name="Iida T."/>
            <person name="Takami H."/>
            <person name="Honda T."/>
            <person name="Sasakawa C."/>
            <person name="Ogasawara N."/>
            <person name="Yasunaga T."/>
            <person name="Kuhara S."/>
            <person name="Shiba T."/>
            <person name="Hattori M."/>
            <person name="Shinagawa H."/>
        </authorList>
    </citation>
    <scope>NUCLEOTIDE SEQUENCE [LARGE SCALE GENOMIC DNA]</scope>
    <source>
        <strain>O157:H7 / Sakai / RIMD 0509952 / EHEC</strain>
    </source>
</reference>
<evidence type="ECO:0000255" key="1">
    <source>
        <dbReference type="HAMAP-Rule" id="MF_00016"/>
    </source>
</evidence>